<organism>
    <name type="scientific">Escherichia coli O81 (strain ED1a)</name>
    <dbReference type="NCBI Taxonomy" id="585397"/>
    <lineage>
        <taxon>Bacteria</taxon>
        <taxon>Pseudomonadati</taxon>
        <taxon>Pseudomonadota</taxon>
        <taxon>Gammaproteobacteria</taxon>
        <taxon>Enterobacterales</taxon>
        <taxon>Enterobacteriaceae</taxon>
        <taxon>Escherichia</taxon>
    </lineage>
</organism>
<accession>B7MS69</accession>
<name>SULA_ECO81</name>
<keyword id="KW-0131">Cell cycle</keyword>
<keyword id="KW-0132">Cell division</keyword>
<keyword id="KW-0227">DNA damage</keyword>
<keyword id="KW-0717">Septation</keyword>
<keyword id="KW-0742">SOS response</keyword>
<evidence type="ECO:0000255" key="1">
    <source>
        <dbReference type="HAMAP-Rule" id="MF_01179"/>
    </source>
</evidence>
<feature type="chain" id="PRO_1000164430" description="Cell division inhibitor SulA">
    <location>
        <begin position="1"/>
        <end position="169"/>
    </location>
</feature>
<feature type="region of interest" description="FtsZ binding" evidence="1">
    <location>
        <begin position="106"/>
        <end position="112"/>
    </location>
</feature>
<feature type="region of interest" description="Lon protease binding" evidence="1">
    <location>
        <begin position="162"/>
        <end position="169"/>
    </location>
</feature>
<feature type="site" description="Essential for degradation by Lon protease" evidence="1">
    <location>
        <position position="169"/>
    </location>
</feature>
<gene>
    <name evidence="1" type="primary">sulA</name>
    <name type="ordered locus">ECED1_0981</name>
</gene>
<sequence length="169" mass="18743">MYTSGYAHRSSSFSSAASKIARVSTENTTAGLISEVVYREDQPMMTQLLLLPLLQQLGQQSRWQLWLTPQQKLSREWVQASGLPLTKVMQISQLSPCHTVESMVRALRTGNYSVVIGWLADDLTAEEHAELVDAANEGNAMGFIMRPVSASSHATRQLSGLKIHSNLYH</sequence>
<proteinExistence type="inferred from homology"/>
<protein>
    <recommendedName>
        <fullName evidence="1">Cell division inhibitor SulA</fullName>
    </recommendedName>
</protein>
<dbReference type="EMBL" id="CU928162">
    <property type="protein sequence ID" value="CAR07183.1"/>
    <property type="molecule type" value="Genomic_DNA"/>
</dbReference>
<dbReference type="RefSeq" id="WP_000288707.1">
    <property type="nucleotide sequence ID" value="NC_011745.1"/>
</dbReference>
<dbReference type="SMR" id="B7MS69"/>
<dbReference type="KEGG" id="ecq:ECED1_0981"/>
<dbReference type="HOGENOM" id="CLU_118972_1_0_6"/>
<dbReference type="Proteomes" id="UP000000748">
    <property type="component" value="Chromosome"/>
</dbReference>
<dbReference type="GO" id="GO:0000917">
    <property type="term" value="P:division septum assembly"/>
    <property type="evidence" value="ECO:0007669"/>
    <property type="project" value="UniProtKB-KW"/>
</dbReference>
<dbReference type="GO" id="GO:0006281">
    <property type="term" value="P:DNA repair"/>
    <property type="evidence" value="ECO:0007669"/>
    <property type="project" value="TreeGrafter"/>
</dbReference>
<dbReference type="GO" id="GO:0051782">
    <property type="term" value="P:negative regulation of cell division"/>
    <property type="evidence" value="ECO:0007669"/>
    <property type="project" value="UniProtKB-UniRule"/>
</dbReference>
<dbReference type="GO" id="GO:0009432">
    <property type="term" value="P:SOS response"/>
    <property type="evidence" value="ECO:0007669"/>
    <property type="project" value="UniProtKB-UniRule"/>
</dbReference>
<dbReference type="FunFam" id="3.40.50.300:FF:000417">
    <property type="entry name" value="Cell division inhibitor SulA"/>
    <property type="match status" value="1"/>
</dbReference>
<dbReference type="Gene3D" id="3.40.50.300">
    <property type="entry name" value="P-loop containing nucleotide triphosphate hydrolases"/>
    <property type="match status" value="1"/>
</dbReference>
<dbReference type="HAMAP" id="MF_01179">
    <property type="entry name" value="SulA"/>
    <property type="match status" value="1"/>
</dbReference>
<dbReference type="InterPro" id="IPR004596">
    <property type="entry name" value="Cell_div_suppressor_SulA"/>
</dbReference>
<dbReference type="InterPro" id="IPR027417">
    <property type="entry name" value="P-loop_NTPase"/>
</dbReference>
<dbReference type="InterPro" id="IPR050356">
    <property type="entry name" value="SulA_CellDiv_inhibitor"/>
</dbReference>
<dbReference type="InterPro" id="IPR047696">
    <property type="entry name" value="SulA_enterobact"/>
</dbReference>
<dbReference type="NCBIfam" id="NF007892">
    <property type="entry name" value="PRK10595.1"/>
    <property type="match status" value="1"/>
</dbReference>
<dbReference type="NCBIfam" id="TIGR00623">
    <property type="entry name" value="SOS_SulA_coli"/>
    <property type="match status" value="1"/>
</dbReference>
<dbReference type="PANTHER" id="PTHR35369">
    <property type="entry name" value="BLR3025 PROTEIN-RELATED"/>
    <property type="match status" value="1"/>
</dbReference>
<dbReference type="PANTHER" id="PTHR35369:SF4">
    <property type="entry name" value="CELL DIVISION INHIBITOR SULA"/>
    <property type="match status" value="1"/>
</dbReference>
<dbReference type="Pfam" id="PF03846">
    <property type="entry name" value="SulA"/>
    <property type="match status" value="1"/>
</dbReference>
<dbReference type="PIRSF" id="PIRSF003093">
    <property type="entry name" value="SulA"/>
    <property type="match status" value="1"/>
</dbReference>
<dbReference type="SUPFAM" id="SSF52540">
    <property type="entry name" value="P-loop containing nucleoside triphosphate hydrolases"/>
    <property type="match status" value="1"/>
</dbReference>
<comment type="function">
    <text evidence="1">Component of the SOS system and an inhibitor of cell division. Accumulation of SulA causes rapid cessation of cell division and the appearance of long, non-septate filaments. In the presence of GTP, binds a polymerization-competent form of FtsZ in a 1:1 ratio, thus inhibiting FtsZ polymerization and therefore preventing it from participating in the assembly of the Z ring. This mechanism prevents the premature segregation of damaged DNA to daughter cells during cell division.</text>
</comment>
<comment type="subunit">
    <text evidence="1">Interacts with FtsZ.</text>
</comment>
<comment type="induction">
    <text evidence="1">By DNA damage, as part of the SOS response.</text>
</comment>
<comment type="PTM">
    <text evidence="1">Is rapidly cleaved and degraded by the Lon protease once DNA damage is repaired.</text>
</comment>
<comment type="similarity">
    <text evidence="1">Belongs to the SulA family.</text>
</comment>
<reference key="1">
    <citation type="journal article" date="2009" name="PLoS Genet.">
        <title>Organised genome dynamics in the Escherichia coli species results in highly diverse adaptive paths.</title>
        <authorList>
            <person name="Touchon M."/>
            <person name="Hoede C."/>
            <person name="Tenaillon O."/>
            <person name="Barbe V."/>
            <person name="Baeriswyl S."/>
            <person name="Bidet P."/>
            <person name="Bingen E."/>
            <person name="Bonacorsi S."/>
            <person name="Bouchier C."/>
            <person name="Bouvet O."/>
            <person name="Calteau A."/>
            <person name="Chiapello H."/>
            <person name="Clermont O."/>
            <person name="Cruveiller S."/>
            <person name="Danchin A."/>
            <person name="Diard M."/>
            <person name="Dossat C."/>
            <person name="Karoui M.E."/>
            <person name="Frapy E."/>
            <person name="Garry L."/>
            <person name="Ghigo J.M."/>
            <person name="Gilles A.M."/>
            <person name="Johnson J."/>
            <person name="Le Bouguenec C."/>
            <person name="Lescat M."/>
            <person name="Mangenot S."/>
            <person name="Martinez-Jehanne V."/>
            <person name="Matic I."/>
            <person name="Nassif X."/>
            <person name="Oztas S."/>
            <person name="Petit M.A."/>
            <person name="Pichon C."/>
            <person name="Rouy Z."/>
            <person name="Ruf C.S."/>
            <person name="Schneider D."/>
            <person name="Tourret J."/>
            <person name="Vacherie B."/>
            <person name="Vallenet D."/>
            <person name="Medigue C."/>
            <person name="Rocha E.P.C."/>
            <person name="Denamur E."/>
        </authorList>
    </citation>
    <scope>NUCLEOTIDE SEQUENCE [LARGE SCALE GENOMIC DNA]</scope>
    <source>
        <strain>ED1a</strain>
    </source>
</reference>